<reference key="1">
    <citation type="journal article" date="2008" name="Environ. Microbiol.">
        <title>The genome of Erwinia tasmaniensis strain Et1/99, a non-pathogenic bacterium in the genus Erwinia.</title>
        <authorList>
            <person name="Kube M."/>
            <person name="Migdoll A.M."/>
            <person name="Mueller I."/>
            <person name="Kuhl H."/>
            <person name="Beck A."/>
            <person name="Reinhardt R."/>
            <person name="Geider K."/>
        </authorList>
    </citation>
    <scope>NUCLEOTIDE SEQUENCE [LARGE SCALE GENOMIC DNA]</scope>
    <source>
        <strain>DSM 17950 / CFBP 7177 / CIP 109463 / NCPPB 4357 / Et1/99</strain>
    </source>
</reference>
<evidence type="ECO:0000255" key="1">
    <source>
        <dbReference type="HAMAP-Rule" id="MF_00281"/>
    </source>
</evidence>
<feature type="chain" id="PRO_1000114872" description="Phenylalanine--tRNA ligase alpha subunit">
    <location>
        <begin position="1"/>
        <end position="327"/>
    </location>
</feature>
<feature type="binding site" evidence="1">
    <location>
        <position position="252"/>
    </location>
    <ligand>
        <name>Mg(2+)</name>
        <dbReference type="ChEBI" id="CHEBI:18420"/>
        <note>shared with beta subunit</note>
    </ligand>
</feature>
<organism>
    <name type="scientific">Erwinia tasmaniensis (strain DSM 17950 / CFBP 7177 / CIP 109463 / NCPPB 4357 / Et1/99)</name>
    <dbReference type="NCBI Taxonomy" id="465817"/>
    <lineage>
        <taxon>Bacteria</taxon>
        <taxon>Pseudomonadati</taxon>
        <taxon>Pseudomonadota</taxon>
        <taxon>Gammaproteobacteria</taxon>
        <taxon>Enterobacterales</taxon>
        <taxon>Erwiniaceae</taxon>
        <taxon>Erwinia</taxon>
    </lineage>
</organism>
<proteinExistence type="inferred from homology"/>
<protein>
    <recommendedName>
        <fullName evidence="1">Phenylalanine--tRNA ligase alpha subunit</fullName>
        <ecNumber evidence="1">6.1.1.20</ecNumber>
    </recommendedName>
    <alternativeName>
        <fullName evidence="1">Phenylalanyl-tRNA synthetase alpha subunit</fullName>
        <shortName evidence="1">PheRS</shortName>
    </alternativeName>
</protein>
<gene>
    <name evidence="1" type="primary">pheS</name>
    <name type="ordered locus">ETA_18370</name>
</gene>
<dbReference type="EC" id="6.1.1.20" evidence="1"/>
<dbReference type="EMBL" id="CU468135">
    <property type="protein sequence ID" value="CAO96883.1"/>
    <property type="molecule type" value="Genomic_DNA"/>
</dbReference>
<dbReference type="RefSeq" id="WP_012441568.1">
    <property type="nucleotide sequence ID" value="NC_010694.1"/>
</dbReference>
<dbReference type="SMR" id="B2VEL4"/>
<dbReference type="STRING" id="465817.ETA_18370"/>
<dbReference type="KEGG" id="eta:ETA_18370"/>
<dbReference type="eggNOG" id="COG0016">
    <property type="taxonomic scope" value="Bacteria"/>
</dbReference>
<dbReference type="HOGENOM" id="CLU_025086_0_1_6"/>
<dbReference type="OrthoDB" id="9800719at2"/>
<dbReference type="Proteomes" id="UP000001726">
    <property type="component" value="Chromosome"/>
</dbReference>
<dbReference type="GO" id="GO:0005737">
    <property type="term" value="C:cytoplasm"/>
    <property type="evidence" value="ECO:0007669"/>
    <property type="project" value="UniProtKB-SubCell"/>
</dbReference>
<dbReference type="GO" id="GO:0005524">
    <property type="term" value="F:ATP binding"/>
    <property type="evidence" value="ECO:0007669"/>
    <property type="project" value="UniProtKB-UniRule"/>
</dbReference>
<dbReference type="GO" id="GO:0000287">
    <property type="term" value="F:magnesium ion binding"/>
    <property type="evidence" value="ECO:0007669"/>
    <property type="project" value="UniProtKB-UniRule"/>
</dbReference>
<dbReference type="GO" id="GO:0004826">
    <property type="term" value="F:phenylalanine-tRNA ligase activity"/>
    <property type="evidence" value="ECO:0007669"/>
    <property type="project" value="UniProtKB-UniRule"/>
</dbReference>
<dbReference type="GO" id="GO:0000049">
    <property type="term" value="F:tRNA binding"/>
    <property type="evidence" value="ECO:0007669"/>
    <property type="project" value="InterPro"/>
</dbReference>
<dbReference type="GO" id="GO:0006432">
    <property type="term" value="P:phenylalanyl-tRNA aminoacylation"/>
    <property type="evidence" value="ECO:0007669"/>
    <property type="project" value="UniProtKB-UniRule"/>
</dbReference>
<dbReference type="CDD" id="cd00496">
    <property type="entry name" value="PheRS_alpha_core"/>
    <property type="match status" value="1"/>
</dbReference>
<dbReference type="FunFam" id="3.30.930.10:FF:000003">
    <property type="entry name" value="Phenylalanine--tRNA ligase alpha subunit"/>
    <property type="match status" value="1"/>
</dbReference>
<dbReference type="Gene3D" id="3.30.930.10">
    <property type="entry name" value="Bira Bifunctional Protein, Domain 2"/>
    <property type="match status" value="1"/>
</dbReference>
<dbReference type="HAMAP" id="MF_00281">
    <property type="entry name" value="Phe_tRNA_synth_alpha1"/>
    <property type="match status" value="1"/>
</dbReference>
<dbReference type="InterPro" id="IPR006195">
    <property type="entry name" value="aa-tRNA-synth_II"/>
</dbReference>
<dbReference type="InterPro" id="IPR045864">
    <property type="entry name" value="aa-tRNA-synth_II/BPL/LPL"/>
</dbReference>
<dbReference type="InterPro" id="IPR004529">
    <property type="entry name" value="Phe-tRNA-synth_IIc_asu"/>
</dbReference>
<dbReference type="InterPro" id="IPR004188">
    <property type="entry name" value="Phe-tRNA_ligase_II_N"/>
</dbReference>
<dbReference type="InterPro" id="IPR022911">
    <property type="entry name" value="Phe_tRNA_ligase_alpha1_bac"/>
</dbReference>
<dbReference type="InterPro" id="IPR002319">
    <property type="entry name" value="Phenylalanyl-tRNA_Synthase"/>
</dbReference>
<dbReference type="InterPro" id="IPR010978">
    <property type="entry name" value="tRNA-bd_arm"/>
</dbReference>
<dbReference type="NCBIfam" id="TIGR00468">
    <property type="entry name" value="pheS"/>
    <property type="match status" value="1"/>
</dbReference>
<dbReference type="PANTHER" id="PTHR11538:SF41">
    <property type="entry name" value="PHENYLALANINE--TRNA LIGASE, MITOCHONDRIAL"/>
    <property type="match status" value="1"/>
</dbReference>
<dbReference type="PANTHER" id="PTHR11538">
    <property type="entry name" value="PHENYLALANYL-TRNA SYNTHETASE"/>
    <property type="match status" value="1"/>
</dbReference>
<dbReference type="Pfam" id="PF02912">
    <property type="entry name" value="Phe_tRNA-synt_N"/>
    <property type="match status" value="1"/>
</dbReference>
<dbReference type="Pfam" id="PF01409">
    <property type="entry name" value="tRNA-synt_2d"/>
    <property type="match status" value="1"/>
</dbReference>
<dbReference type="SUPFAM" id="SSF55681">
    <property type="entry name" value="Class II aaRS and biotin synthetases"/>
    <property type="match status" value="1"/>
</dbReference>
<dbReference type="SUPFAM" id="SSF46589">
    <property type="entry name" value="tRNA-binding arm"/>
    <property type="match status" value="1"/>
</dbReference>
<dbReference type="PROSITE" id="PS50862">
    <property type="entry name" value="AA_TRNA_LIGASE_II"/>
    <property type="match status" value="1"/>
</dbReference>
<accession>B2VEL4</accession>
<name>SYFA_ERWT9</name>
<sequence>MSHLADLVERALAAINDAQDVAALDNVRVEYLGKKGHLTLQMTTLRELPAEERPAAGAVINEAKQQVQDALNAQKNALESAVMNARLAQETIDVSLPGRRIENGGLHPVTRTIDRIETFFGELGFSVETGPEIEDDYHNFDALNIPAHHPARADHDTFWFDATRLLRTQTSGVQIRTMKNQQPPIRVIAPGRVYRNDYDQTHTPMFHQMEGLIVDKNISFTNLKGTLHDFLNNFFEDDMQVRFRPSYFPFTEPSAEVDVMGKNGKWLEVLGCGMVHPNVLSNAGIDPEVYSGFAFGMGMERLTMLRYGVTDLRAFFENDLRFLKQFK</sequence>
<comment type="catalytic activity">
    <reaction evidence="1">
        <text>tRNA(Phe) + L-phenylalanine + ATP = L-phenylalanyl-tRNA(Phe) + AMP + diphosphate + H(+)</text>
        <dbReference type="Rhea" id="RHEA:19413"/>
        <dbReference type="Rhea" id="RHEA-COMP:9668"/>
        <dbReference type="Rhea" id="RHEA-COMP:9699"/>
        <dbReference type="ChEBI" id="CHEBI:15378"/>
        <dbReference type="ChEBI" id="CHEBI:30616"/>
        <dbReference type="ChEBI" id="CHEBI:33019"/>
        <dbReference type="ChEBI" id="CHEBI:58095"/>
        <dbReference type="ChEBI" id="CHEBI:78442"/>
        <dbReference type="ChEBI" id="CHEBI:78531"/>
        <dbReference type="ChEBI" id="CHEBI:456215"/>
        <dbReference type="EC" id="6.1.1.20"/>
    </reaction>
</comment>
<comment type="cofactor">
    <cofactor evidence="1">
        <name>Mg(2+)</name>
        <dbReference type="ChEBI" id="CHEBI:18420"/>
    </cofactor>
    <text evidence="1">Binds 2 magnesium ions per tetramer.</text>
</comment>
<comment type="subunit">
    <text evidence="1">Tetramer of two alpha and two beta subunits.</text>
</comment>
<comment type="subcellular location">
    <subcellularLocation>
        <location evidence="1">Cytoplasm</location>
    </subcellularLocation>
</comment>
<comment type="similarity">
    <text evidence="1">Belongs to the class-II aminoacyl-tRNA synthetase family. Phe-tRNA synthetase alpha subunit type 1 subfamily.</text>
</comment>
<keyword id="KW-0030">Aminoacyl-tRNA synthetase</keyword>
<keyword id="KW-0067">ATP-binding</keyword>
<keyword id="KW-0963">Cytoplasm</keyword>
<keyword id="KW-0436">Ligase</keyword>
<keyword id="KW-0460">Magnesium</keyword>
<keyword id="KW-0479">Metal-binding</keyword>
<keyword id="KW-0547">Nucleotide-binding</keyword>
<keyword id="KW-0648">Protein biosynthesis</keyword>
<keyword id="KW-1185">Reference proteome</keyword>